<organism>
    <name type="scientific">Methylomonas aminofaciens</name>
    <dbReference type="NCBI Taxonomy" id="46896"/>
    <lineage>
        <taxon>Bacteria</taxon>
        <taxon>Pseudomonadati</taxon>
        <taxon>Pseudomonadota</taxon>
        <taxon>Gammaproteobacteria</taxon>
        <taxon>Methylococcales</taxon>
        <taxon>Methylococcaceae</taxon>
        <taxon>Methylomonas</taxon>
    </lineage>
</organism>
<keyword id="KW-0119">Carbohydrate metabolism</keyword>
<keyword id="KW-0903">Direct protein sequencing</keyword>
<keyword id="KW-0456">Lyase</keyword>
<keyword id="KW-0554">One-carbon metabolism</keyword>
<proteinExistence type="evidence at protein level"/>
<accession>Q48907</accession>
<comment type="function">
    <text evidence="1">Catalyzes the condensation of ribulose 5-phosphate with formaldehyde to form 3-hexulose 6-phosphate.</text>
</comment>
<comment type="catalytic activity">
    <reaction>
        <text>D-ribulose 5-phosphate + formaldehyde = D-arabino-hex-3-ulose 6-phosphate</text>
        <dbReference type="Rhea" id="RHEA:25201"/>
        <dbReference type="ChEBI" id="CHEBI:16842"/>
        <dbReference type="ChEBI" id="CHEBI:58121"/>
        <dbReference type="ChEBI" id="CHEBI:58542"/>
        <dbReference type="EC" id="4.1.2.43"/>
    </reaction>
</comment>
<comment type="pathway">
    <text>One-carbon metabolism; formaldehyde assimilation via RuMP pathway; D-fructose 6-phosphate from D-ribulose 5-phosphate and formaldehyde: step 1/2.</text>
</comment>
<comment type="subunit">
    <text evidence="2">Homodimer.</text>
</comment>
<comment type="similarity">
    <text evidence="3">Belongs to the HPS/KGPDC family. HPS subfamily.</text>
</comment>
<dbReference type="EC" id="4.1.2.43"/>
<dbReference type="EMBL" id="D64136">
    <property type="protein sequence ID" value="BAA19967.1"/>
    <property type="molecule type" value="Genomic_DNA"/>
</dbReference>
<dbReference type="SMR" id="Q48907"/>
<dbReference type="KEGG" id="ag:BAA19967"/>
<dbReference type="BRENDA" id="4.1.2.43">
    <property type="organism ID" value="7933"/>
</dbReference>
<dbReference type="UniPathway" id="UPA00294">
    <property type="reaction ID" value="UER00434"/>
</dbReference>
<dbReference type="GO" id="GO:0033982">
    <property type="term" value="F:3-dehydro-L-gulonate-6-phosphate decarboxylase activity"/>
    <property type="evidence" value="ECO:0007669"/>
    <property type="project" value="TreeGrafter"/>
</dbReference>
<dbReference type="GO" id="GO:0043801">
    <property type="term" value="F:hexulose-6-phosphate synthase activity"/>
    <property type="evidence" value="ECO:0007669"/>
    <property type="project" value="UniProtKB-EC"/>
</dbReference>
<dbReference type="GO" id="GO:0004590">
    <property type="term" value="F:orotidine-5'-phosphate decarboxylase activity"/>
    <property type="evidence" value="ECO:0007669"/>
    <property type="project" value="InterPro"/>
</dbReference>
<dbReference type="GO" id="GO:0006207">
    <property type="term" value="P:'de novo' pyrimidine nucleobase biosynthetic process"/>
    <property type="evidence" value="ECO:0007669"/>
    <property type="project" value="InterPro"/>
</dbReference>
<dbReference type="GO" id="GO:0019647">
    <property type="term" value="P:formaldehyde assimilation via ribulose monophosphate cycle"/>
    <property type="evidence" value="ECO:0007669"/>
    <property type="project" value="UniProtKB-UniPathway"/>
</dbReference>
<dbReference type="GO" id="GO:0019854">
    <property type="term" value="P:L-ascorbic acid catabolic process"/>
    <property type="evidence" value="ECO:0007669"/>
    <property type="project" value="TreeGrafter"/>
</dbReference>
<dbReference type="GO" id="GO:0006730">
    <property type="term" value="P:one-carbon metabolic process"/>
    <property type="evidence" value="ECO:0007669"/>
    <property type="project" value="UniProtKB-KW"/>
</dbReference>
<dbReference type="CDD" id="cd04726">
    <property type="entry name" value="KGPDC_HPS"/>
    <property type="match status" value="1"/>
</dbReference>
<dbReference type="FunFam" id="3.20.20.70:FF:000022">
    <property type="entry name" value="3-keto-L-gulonate-6-phosphate decarboxylase UlaD"/>
    <property type="match status" value="1"/>
</dbReference>
<dbReference type="Gene3D" id="3.20.20.70">
    <property type="entry name" value="Aldolase class I"/>
    <property type="match status" value="1"/>
</dbReference>
<dbReference type="InterPro" id="IPR017553">
    <property type="entry name" value="3-hexulose-6-phosphate_synth"/>
</dbReference>
<dbReference type="InterPro" id="IPR013785">
    <property type="entry name" value="Aldolase_TIM"/>
</dbReference>
<dbReference type="InterPro" id="IPR041710">
    <property type="entry name" value="HPS/KGPDC"/>
</dbReference>
<dbReference type="InterPro" id="IPR001754">
    <property type="entry name" value="OMPdeCOase_dom"/>
</dbReference>
<dbReference type="InterPro" id="IPR011060">
    <property type="entry name" value="RibuloseP-bd_barrel"/>
</dbReference>
<dbReference type="NCBIfam" id="TIGR03128">
    <property type="entry name" value="RuMP_HxlA"/>
    <property type="match status" value="1"/>
</dbReference>
<dbReference type="PANTHER" id="PTHR35039">
    <property type="entry name" value="3-KETO-L-GULONATE-6-PHOSPHATE DECARBOXYLASE SGBH-RELATED"/>
    <property type="match status" value="1"/>
</dbReference>
<dbReference type="PANTHER" id="PTHR35039:SF3">
    <property type="entry name" value="3-KETO-L-GULONATE-6-PHOSPHATE DECARBOXYLASE SGBH-RELATED"/>
    <property type="match status" value="1"/>
</dbReference>
<dbReference type="Pfam" id="PF00215">
    <property type="entry name" value="OMPdecase"/>
    <property type="match status" value="1"/>
</dbReference>
<dbReference type="SMART" id="SM00934">
    <property type="entry name" value="OMPdecase"/>
    <property type="match status" value="1"/>
</dbReference>
<dbReference type="SUPFAM" id="SSF51366">
    <property type="entry name" value="Ribulose-phoshate binding barrel"/>
    <property type="match status" value="1"/>
</dbReference>
<feature type="initiator methionine" description="Removed" evidence="2">
    <location>
        <position position="1"/>
    </location>
</feature>
<feature type="chain" id="PRO_0000212102" description="3-hexulose-6-phosphate synthase">
    <location>
        <begin position="2"/>
        <end position="209"/>
    </location>
</feature>
<sequence>MALTQMALDSLDFDATVALAEKVAPHVDILEIGTPCIKHNGIKLLETLRAKFPNNKILVDLKTMDAGFYEAEPFYKAGADITTVLGVADLGTIKGVIDAANKYGKKAQIDLINVGDKAARTKEVAKLGAHIIGVHTGLDQQAAGQTPFADLATVTGLNLGLEVSVAGGVKPATVAQVKDAGATIIVAGAAIYGAADPAAAAAEITGLAK</sequence>
<evidence type="ECO:0000269" key="1">
    <source>
    </source>
</evidence>
<evidence type="ECO:0000269" key="2">
    <source>
    </source>
</evidence>
<evidence type="ECO:0000305" key="3"/>
<protein>
    <recommendedName>
        <fullName>3-hexulose-6-phosphate synthase</fullName>
        <shortName>HPS</shortName>
        <ecNumber>4.1.2.43</ecNumber>
    </recommendedName>
    <alternativeName>
        <fullName>D-arabino-3-hexulose-6-phosphate formaldehyde lyase</fullName>
    </alternativeName>
</protein>
<reference key="1">
    <citation type="journal article" date="1996" name="FEMS Microbiol. Lett.">
        <title>Cloning and sequence analysis of the gene encoding 3-hexulose-6-phosphate synthase from the methylotrophic bacterium, Methylomonas aminofaciens 77a, and its expression in Escherichia coli.</title>
        <authorList>
            <person name="Yanase H."/>
            <person name="Ikeyama K."/>
            <person name="Mitsui R."/>
            <person name="Ra S."/>
            <person name="Kita K."/>
            <person name="Sakai Y."/>
            <person name="Kato N."/>
        </authorList>
    </citation>
    <scope>NUCLEOTIDE SEQUENCE [GENOMIC DNA]</scope>
    <scope>PROTEIN SEQUENCE OF 2-48; 64-77; 103-107 AND 179-198</scope>
    <scope>SUBUNIT</scope>
    <source>
        <strain>77a</strain>
    </source>
</reference>
<reference key="2">
    <citation type="journal article" date="1999" name="FEMS Microbiol. Lett.">
        <title>Organization of the genes involved in the ribulose monophosphate pathway in an obligate methylotrophic bacterium, Methylomonas aminofaciens 77a.</title>
        <authorList>
            <person name="Sakai Y."/>
            <person name="Mitsui R."/>
            <person name="Katayama Y."/>
            <person name="Yanase H."/>
            <person name="Kato N."/>
        </authorList>
    </citation>
    <scope>FUNCTION</scope>
    <source>
        <strain>77a</strain>
    </source>
</reference>
<gene>
    <name type="primary">rmpA</name>
    <name type="synonym">hps</name>
</gene>
<name>HPS_METAM</name>